<reference key="1">
    <citation type="journal article" date="2003" name="Proc. Natl. Acad. Sci. U.S.A.">
        <title>The complete genome sequence of Mycobacterium bovis.</title>
        <authorList>
            <person name="Garnier T."/>
            <person name="Eiglmeier K."/>
            <person name="Camus J.-C."/>
            <person name="Medina N."/>
            <person name="Mansoor H."/>
            <person name="Pryor M."/>
            <person name="Duthoy S."/>
            <person name="Grondin S."/>
            <person name="Lacroix C."/>
            <person name="Monsempe C."/>
            <person name="Simon S."/>
            <person name="Harris B."/>
            <person name="Atkin R."/>
            <person name="Doggett J."/>
            <person name="Mayes R."/>
            <person name="Keating L."/>
            <person name="Wheeler P.R."/>
            <person name="Parkhill J."/>
            <person name="Barrell B.G."/>
            <person name="Cole S.T."/>
            <person name="Gordon S.V."/>
            <person name="Hewinson R.G."/>
        </authorList>
    </citation>
    <scope>NUCLEOTIDE SEQUENCE [LARGE SCALE GENOMIC DNA]</scope>
    <source>
        <strain>ATCC BAA-935 / AF2122/97</strain>
    </source>
</reference>
<reference key="2">
    <citation type="journal article" date="2017" name="Genome Announc.">
        <title>Updated reference genome sequence and annotation of Mycobacterium bovis AF2122/97.</title>
        <authorList>
            <person name="Malone K.M."/>
            <person name="Farrell D."/>
            <person name="Stuber T.P."/>
            <person name="Schubert O.T."/>
            <person name="Aebersold R."/>
            <person name="Robbe-Austerman S."/>
            <person name="Gordon S.V."/>
        </authorList>
    </citation>
    <scope>NUCLEOTIDE SEQUENCE [LARGE SCALE GENOMIC DNA]</scope>
    <scope>GENOME REANNOTATION</scope>
    <source>
        <strain>ATCC BAA-935 / AF2122/97</strain>
    </source>
</reference>
<feature type="chain" id="PRO_0000054306" description="Glycogen operon protein GlgX homolog">
    <location>
        <begin position="1"/>
        <end position="721"/>
    </location>
</feature>
<feature type="active site" description="Nucleophile" evidence="1">
    <location>
        <position position="362"/>
    </location>
</feature>
<feature type="active site" description="Proton donor" evidence="1">
    <location>
        <position position="398"/>
    </location>
</feature>
<feature type="site" description="Transition state stabilizer" evidence="1">
    <location>
        <position position="470"/>
    </location>
</feature>
<dbReference type="EC" id="3.2.1.-"/>
<dbReference type="EMBL" id="LT708304">
    <property type="protein sequence ID" value="SIU00194.1"/>
    <property type="molecule type" value="Genomic_DNA"/>
</dbReference>
<dbReference type="RefSeq" id="NP_855243.1">
    <property type="nucleotide sequence ID" value="NC_002945.3"/>
</dbReference>
<dbReference type="RefSeq" id="WP_003898930.1">
    <property type="nucleotide sequence ID" value="NC_002945.4"/>
</dbReference>
<dbReference type="SMR" id="P0A4Y5"/>
<dbReference type="KEGG" id="mbo:BQ2027_MB1591C"/>
<dbReference type="PATRIC" id="fig|233413.5.peg.1738"/>
<dbReference type="Proteomes" id="UP000001419">
    <property type="component" value="Chromosome"/>
</dbReference>
<dbReference type="GO" id="GO:0004133">
    <property type="term" value="F:glycogen debranching enzyme activity"/>
    <property type="evidence" value="ECO:0007669"/>
    <property type="project" value="InterPro"/>
</dbReference>
<dbReference type="GO" id="GO:0004553">
    <property type="term" value="F:hydrolase activity, hydrolyzing O-glycosyl compounds"/>
    <property type="evidence" value="ECO:0007669"/>
    <property type="project" value="InterPro"/>
</dbReference>
<dbReference type="GO" id="GO:0005980">
    <property type="term" value="P:glycogen catabolic process"/>
    <property type="evidence" value="ECO:0007669"/>
    <property type="project" value="InterPro"/>
</dbReference>
<dbReference type="CDD" id="cd11326">
    <property type="entry name" value="AmyAc_Glg_debranch"/>
    <property type="match status" value="1"/>
</dbReference>
<dbReference type="CDD" id="cd02856">
    <property type="entry name" value="E_set_GDE_Isoamylase_N"/>
    <property type="match status" value="1"/>
</dbReference>
<dbReference type="Gene3D" id="3.20.20.80">
    <property type="entry name" value="Glycosidases"/>
    <property type="match status" value="1"/>
</dbReference>
<dbReference type="Gene3D" id="2.60.40.1180">
    <property type="entry name" value="Golgi alpha-mannosidase II"/>
    <property type="match status" value="1"/>
</dbReference>
<dbReference type="Gene3D" id="2.60.40.10">
    <property type="entry name" value="Immunoglobulins"/>
    <property type="match status" value="1"/>
</dbReference>
<dbReference type="InterPro" id="IPR044505">
    <property type="entry name" value="GlgX_Isoamylase_N_E_set"/>
</dbReference>
<dbReference type="InterPro" id="IPR006047">
    <property type="entry name" value="Glyco_hydro_13_cat_dom"/>
</dbReference>
<dbReference type="InterPro" id="IPR004193">
    <property type="entry name" value="Glyco_hydro_13_N"/>
</dbReference>
<dbReference type="InterPro" id="IPR013780">
    <property type="entry name" value="Glyco_hydro_b"/>
</dbReference>
<dbReference type="InterPro" id="IPR011837">
    <property type="entry name" value="Glycogen_debranch_GlgX"/>
</dbReference>
<dbReference type="InterPro" id="IPR017853">
    <property type="entry name" value="Glycoside_hydrolase_SF"/>
</dbReference>
<dbReference type="InterPro" id="IPR013783">
    <property type="entry name" value="Ig-like_fold"/>
</dbReference>
<dbReference type="InterPro" id="IPR014756">
    <property type="entry name" value="Ig_E-set"/>
</dbReference>
<dbReference type="NCBIfam" id="TIGR02100">
    <property type="entry name" value="glgX_debranch"/>
    <property type="match status" value="1"/>
</dbReference>
<dbReference type="PANTHER" id="PTHR43002">
    <property type="entry name" value="GLYCOGEN DEBRANCHING ENZYME"/>
    <property type="match status" value="1"/>
</dbReference>
<dbReference type="Pfam" id="PF00128">
    <property type="entry name" value="Alpha-amylase"/>
    <property type="match status" value="1"/>
</dbReference>
<dbReference type="Pfam" id="PF02922">
    <property type="entry name" value="CBM_48"/>
    <property type="match status" value="1"/>
</dbReference>
<dbReference type="SMART" id="SM00642">
    <property type="entry name" value="Aamy"/>
    <property type="match status" value="1"/>
</dbReference>
<dbReference type="SUPFAM" id="SSF51445">
    <property type="entry name" value="(Trans)glycosidases"/>
    <property type="match status" value="1"/>
</dbReference>
<dbReference type="SUPFAM" id="SSF81296">
    <property type="entry name" value="E set domains"/>
    <property type="match status" value="1"/>
</dbReference>
<dbReference type="SUPFAM" id="SSF51011">
    <property type="entry name" value="Glycosyl hydrolase domain"/>
    <property type="match status" value="1"/>
</dbReference>
<name>GLGX_MYCBO</name>
<keyword id="KW-0326">Glycosidase</keyword>
<keyword id="KW-0378">Hydrolase</keyword>
<keyword id="KW-1185">Reference proteome</keyword>
<protein>
    <recommendedName>
        <fullName>Glycogen operon protein GlgX homolog</fullName>
        <ecNumber>3.2.1.-</ecNumber>
    </recommendedName>
</protein>
<gene>
    <name type="primary">glgX</name>
    <name type="synonym">treX</name>
    <name type="ordered locus">BQ2027_MB1591C</name>
</gene>
<organism>
    <name type="scientific">Mycobacterium bovis (strain ATCC BAA-935 / AF2122/97)</name>
    <dbReference type="NCBI Taxonomy" id="233413"/>
    <lineage>
        <taxon>Bacteria</taxon>
        <taxon>Bacillati</taxon>
        <taxon>Actinomycetota</taxon>
        <taxon>Actinomycetes</taxon>
        <taxon>Mycobacteriales</taxon>
        <taxon>Mycobacteriaceae</taxon>
        <taxon>Mycobacterium</taxon>
        <taxon>Mycobacterium tuberculosis complex</taxon>
    </lineage>
</organism>
<proteinExistence type="inferred from homology"/>
<accession>P0A4Y5</accession>
<accession>A0A1R3XZL8</accession>
<accession>Q10767</accession>
<accession>X2BI83</accession>
<sequence length="721" mass="81081">MSSNNAGESDGTGPALPTVWPGNAYPLGATYDGAGTNFSLFSEIAEKVELCLIDEDGVESRIPLDEVDGYVWHAYLPNITPGQRYGFRVHGPFDPAAGHRCDPSKLLLDPYGKSFHGDFTFGQALYSYDVNAVDPDSTPPMVDSLGHTMTSVVINPFFDWAYDRSPRTPYHETVIYEAHVKGMTQTHPSIPPELRGTYAGLAHPVIIDHLNELNVTAVELMPVHQFLHDSRLLDLGLRNYWGYNTFGFFAPHHQYASTRQAGSAVAEFKTMVRSLHEAGIEVILDVVYNHTAEGNHLGPTINFRGIDNTAYYRLMDHDLRFYKDFTGTGNSLNARHPHTLQLIMDSLRYWVIEMHVDGFRFDLASTLARELHDVDRLSAFFDLVQQDPVVSQVKLIAEPWDVGEGGYQVGNFPGLWTEWNGKYRDTVRDYWRGEPATLGEFASRLTGSSDLYEATGRRPSASINFVTAHDGFTLNDLVSYNDKHNEANGENNRDGESYNRSWNCGVEGPTDDPDILALRARQMRNMWATLMVSQGTPMIAHGDEIGRTQYGNNNVYCQDSELSWMDWSLVDKNADLLAFARKATTLRKNHKVFRRRRFFEGEPIRSGDEVRDIAWLTPSGREMTHEDWGRGFDRCVAVFLNGEAITAPDARGERVVDDSFLLCFNAHDHDVEFVMPHDGYAQQWTGELDTNDPVGDIDLTVTATDTFSVPARSLLVLRKTL</sequence>
<comment type="similarity">
    <text evidence="2">Belongs to the glycosyl hydrolase 13 family.</text>
</comment>
<evidence type="ECO:0000250" key="1"/>
<evidence type="ECO:0000305" key="2"/>